<geneLocation type="chloroplast"/>
<feature type="chain" id="PRO_0000344330" description="Small ribosomal subunit protein uS7cz/uS7cy">
    <location>
        <begin position="1"/>
        <end position="155"/>
    </location>
</feature>
<proteinExistence type="inferred from homology"/>
<gene>
    <name type="primary">rps7-A</name>
</gene>
<gene>
    <name type="primary">rps7-B</name>
</gene>
<evidence type="ECO:0000250" key="1"/>
<evidence type="ECO:0000255" key="2">
    <source>
        <dbReference type="HAMAP-Rule" id="MF_00480"/>
    </source>
</evidence>
<evidence type="ECO:0000305" key="3"/>
<name>RR7_CHLSC</name>
<keyword id="KW-0150">Chloroplast</keyword>
<keyword id="KW-0934">Plastid</keyword>
<keyword id="KW-0687">Ribonucleoprotein</keyword>
<keyword id="KW-0689">Ribosomal protein</keyword>
<keyword id="KW-0694">RNA-binding</keyword>
<keyword id="KW-0699">rRNA-binding</keyword>
<sequence length="155" mass="17391">MSRRGTAEEKTTKSDPIYRNRLVNMLVNRILKHGKKSLAYQIIYRAVKKIQQKTETNPLSVLRQAMRGVTPDIAVKARRVGGSTHQVPLEIGSTQGKALAIRWLLGASRKRPGRNMAFKLSSELVDAAKGSGDAIRKKEETHRMAEANRAFAHFR</sequence>
<dbReference type="EMBL" id="EF380352">
    <property type="protein sequence ID" value="ABQ43305.1"/>
    <property type="molecule type" value="Genomic_DNA"/>
</dbReference>
<dbReference type="EMBL" id="EF380352">
    <property type="protein sequence ID" value="ABQ43319.1"/>
    <property type="molecule type" value="Genomic_DNA"/>
</dbReference>
<dbReference type="SMR" id="A6MMG8"/>
<dbReference type="GO" id="GO:0009507">
    <property type="term" value="C:chloroplast"/>
    <property type="evidence" value="ECO:0007669"/>
    <property type="project" value="UniProtKB-SubCell"/>
</dbReference>
<dbReference type="GO" id="GO:0015935">
    <property type="term" value="C:small ribosomal subunit"/>
    <property type="evidence" value="ECO:0007669"/>
    <property type="project" value="InterPro"/>
</dbReference>
<dbReference type="GO" id="GO:0019843">
    <property type="term" value="F:rRNA binding"/>
    <property type="evidence" value="ECO:0007669"/>
    <property type="project" value="UniProtKB-UniRule"/>
</dbReference>
<dbReference type="GO" id="GO:0003735">
    <property type="term" value="F:structural constituent of ribosome"/>
    <property type="evidence" value="ECO:0007669"/>
    <property type="project" value="InterPro"/>
</dbReference>
<dbReference type="GO" id="GO:0006412">
    <property type="term" value="P:translation"/>
    <property type="evidence" value="ECO:0007669"/>
    <property type="project" value="UniProtKB-UniRule"/>
</dbReference>
<dbReference type="CDD" id="cd14871">
    <property type="entry name" value="uS7_Chloroplast"/>
    <property type="match status" value="1"/>
</dbReference>
<dbReference type="FunFam" id="1.10.455.10:FF:000001">
    <property type="entry name" value="30S ribosomal protein S7"/>
    <property type="match status" value="1"/>
</dbReference>
<dbReference type="Gene3D" id="1.10.455.10">
    <property type="entry name" value="Ribosomal protein S7 domain"/>
    <property type="match status" value="1"/>
</dbReference>
<dbReference type="HAMAP" id="MF_00480_B">
    <property type="entry name" value="Ribosomal_uS7_B"/>
    <property type="match status" value="1"/>
</dbReference>
<dbReference type="InterPro" id="IPR000235">
    <property type="entry name" value="Ribosomal_uS7"/>
</dbReference>
<dbReference type="InterPro" id="IPR005717">
    <property type="entry name" value="Ribosomal_uS7_bac/org-type"/>
</dbReference>
<dbReference type="InterPro" id="IPR020606">
    <property type="entry name" value="Ribosomal_uS7_CS"/>
</dbReference>
<dbReference type="InterPro" id="IPR023798">
    <property type="entry name" value="Ribosomal_uS7_dom"/>
</dbReference>
<dbReference type="InterPro" id="IPR036823">
    <property type="entry name" value="Ribosomal_uS7_dom_sf"/>
</dbReference>
<dbReference type="NCBIfam" id="TIGR01029">
    <property type="entry name" value="rpsG_bact"/>
    <property type="match status" value="1"/>
</dbReference>
<dbReference type="PANTHER" id="PTHR11205">
    <property type="entry name" value="RIBOSOMAL PROTEIN S7"/>
    <property type="match status" value="1"/>
</dbReference>
<dbReference type="Pfam" id="PF00177">
    <property type="entry name" value="Ribosomal_S7"/>
    <property type="match status" value="1"/>
</dbReference>
<dbReference type="PIRSF" id="PIRSF002122">
    <property type="entry name" value="RPS7p_RPS7a_RPS5e_RPS7o"/>
    <property type="match status" value="1"/>
</dbReference>
<dbReference type="SUPFAM" id="SSF47973">
    <property type="entry name" value="Ribosomal protein S7"/>
    <property type="match status" value="1"/>
</dbReference>
<dbReference type="PROSITE" id="PS00052">
    <property type="entry name" value="RIBOSOMAL_S7"/>
    <property type="match status" value="1"/>
</dbReference>
<organism>
    <name type="scientific">Chloranthus spicatus</name>
    <name type="common">Chulantree</name>
    <name type="synonym">Nigrina spicata</name>
    <dbReference type="NCBI Taxonomy" id="13006"/>
    <lineage>
        <taxon>Eukaryota</taxon>
        <taxon>Viridiplantae</taxon>
        <taxon>Streptophyta</taxon>
        <taxon>Embryophyta</taxon>
        <taxon>Tracheophyta</taxon>
        <taxon>Spermatophyta</taxon>
        <taxon>Magnoliopsida</taxon>
        <taxon>Chloranthales</taxon>
        <taxon>Chloranthaceae</taxon>
        <taxon>Chloranthus</taxon>
    </lineage>
</organism>
<comment type="function">
    <text evidence="1">One of the primary rRNA binding proteins, it binds directly to 16S rRNA where it nucleates assembly of the head domain of the 30S subunit.</text>
</comment>
<comment type="subunit">
    <text evidence="1">Part of the 30S ribosomal subunit.</text>
</comment>
<comment type="subcellular location">
    <subcellularLocation>
        <location>Plastid</location>
        <location>Chloroplast</location>
    </subcellularLocation>
</comment>
<comment type="similarity">
    <text evidence="3">Belongs to the universal ribosomal protein uS7 family.</text>
</comment>
<protein>
    <recommendedName>
        <fullName evidence="2">Small ribosomal subunit protein uS7cz/uS7cy</fullName>
    </recommendedName>
    <alternativeName>
        <fullName>30S ribosomal protein S7, chloroplastic</fullName>
    </alternativeName>
</protein>
<accession>A6MMG8</accession>
<reference key="1">
    <citation type="journal article" date="2007" name="Mol. Phylogenet. Evol.">
        <title>Phylogenetic and evolutionary implications of complete chloroplast genome sequences of four early-diverging angiosperms: Buxus (Buxaceae), Chloranthus (Chloranthaceae), Dioscorea (Dioscoreaceae), and Illicium (Schisandraceae).</title>
        <authorList>
            <person name="Hansen D.R."/>
            <person name="Dastidar S.G."/>
            <person name="Cai Z."/>
            <person name="Penaflor C."/>
            <person name="Kuehl J.V."/>
            <person name="Boore J.L."/>
            <person name="Jansen R.K."/>
        </authorList>
    </citation>
    <scope>NUCLEOTIDE SEQUENCE [LARGE SCALE GENOMIC DNA]</scope>
</reference>